<organism>
    <name type="scientific">Rhodococcus erythropolis (strain PR4 / NBRC 100887)</name>
    <dbReference type="NCBI Taxonomy" id="234621"/>
    <lineage>
        <taxon>Bacteria</taxon>
        <taxon>Bacillati</taxon>
        <taxon>Actinomycetota</taxon>
        <taxon>Actinomycetes</taxon>
        <taxon>Mycobacteriales</taxon>
        <taxon>Nocardiaceae</taxon>
        <taxon>Rhodococcus</taxon>
        <taxon>Rhodococcus erythropolis group</taxon>
    </lineage>
</organism>
<proteinExistence type="inferred from homology"/>
<comment type="function">
    <text evidence="1">Could be a nuclease involved in processing of the 5'-end of pre-16S rRNA.</text>
</comment>
<comment type="subcellular location">
    <subcellularLocation>
        <location evidence="1">Cytoplasm</location>
    </subcellularLocation>
</comment>
<comment type="similarity">
    <text evidence="1">Belongs to the YqgF nuclease family.</text>
</comment>
<keyword id="KW-0963">Cytoplasm</keyword>
<keyword id="KW-0378">Hydrolase</keyword>
<keyword id="KW-0540">Nuclease</keyword>
<keyword id="KW-0690">Ribosome biogenesis</keyword>
<protein>
    <recommendedName>
        <fullName evidence="1">Putative pre-16S rRNA nuclease</fullName>
        <ecNumber evidence="1">3.1.-.-</ecNumber>
    </recommendedName>
</protein>
<reference key="1">
    <citation type="submission" date="2005-03" db="EMBL/GenBank/DDBJ databases">
        <title>Comparison of the complete genome sequences of Rhodococcus erythropolis PR4 and Rhodococcus opacus B4.</title>
        <authorList>
            <person name="Takarada H."/>
            <person name="Sekine M."/>
            <person name="Hosoyama A."/>
            <person name="Yamada R."/>
            <person name="Fujisawa T."/>
            <person name="Omata S."/>
            <person name="Shimizu A."/>
            <person name="Tsukatani N."/>
            <person name="Tanikawa S."/>
            <person name="Fujita N."/>
            <person name="Harayama S."/>
        </authorList>
    </citation>
    <scope>NUCLEOTIDE SEQUENCE [LARGE SCALE GENOMIC DNA]</scope>
    <source>
        <strain>PR4 / NBRC 100887</strain>
    </source>
</reference>
<evidence type="ECO:0000255" key="1">
    <source>
        <dbReference type="HAMAP-Rule" id="MF_00651"/>
    </source>
</evidence>
<evidence type="ECO:0000256" key="2">
    <source>
        <dbReference type="SAM" id="MobiDB-lite"/>
    </source>
</evidence>
<dbReference type="EC" id="3.1.-.-" evidence="1"/>
<dbReference type="EMBL" id="AP008957">
    <property type="protein sequence ID" value="BAH33694.1"/>
    <property type="molecule type" value="Genomic_DNA"/>
</dbReference>
<dbReference type="SMR" id="C0ZZA9"/>
<dbReference type="KEGG" id="rer:RER_29860"/>
<dbReference type="eggNOG" id="COG0816">
    <property type="taxonomic scope" value="Bacteria"/>
</dbReference>
<dbReference type="HOGENOM" id="CLU_098240_0_1_11"/>
<dbReference type="Proteomes" id="UP000002204">
    <property type="component" value="Chromosome"/>
</dbReference>
<dbReference type="GO" id="GO:0005829">
    <property type="term" value="C:cytosol"/>
    <property type="evidence" value="ECO:0007669"/>
    <property type="project" value="TreeGrafter"/>
</dbReference>
<dbReference type="GO" id="GO:0004518">
    <property type="term" value="F:nuclease activity"/>
    <property type="evidence" value="ECO:0007669"/>
    <property type="project" value="UniProtKB-KW"/>
</dbReference>
<dbReference type="GO" id="GO:0000967">
    <property type="term" value="P:rRNA 5'-end processing"/>
    <property type="evidence" value="ECO:0007669"/>
    <property type="project" value="UniProtKB-UniRule"/>
</dbReference>
<dbReference type="CDD" id="cd16964">
    <property type="entry name" value="YqgF"/>
    <property type="match status" value="1"/>
</dbReference>
<dbReference type="FunFam" id="3.30.420.140:FF:000005">
    <property type="entry name" value="Putative pre-16S rRNA nuclease"/>
    <property type="match status" value="1"/>
</dbReference>
<dbReference type="Gene3D" id="3.30.420.140">
    <property type="entry name" value="YqgF/RNase H-like domain"/>
    <property type="match status" value="1"/>
</dbReference>
<dbReference type="HAMAP" id="MF_00651">
    <property type="entry name" value="Nuclease_YqgF"/>
    <property type="match status" value="1"/>
</dbReference>
<dbReference type="InterPro" id="IPR012337">
    <property type="entry name" value="RNaseH-like_sf"/>
</dbReference>
<dbReference type="InterPro" id="IPR005227">
    <property type="entry name" value="YqgF"/>
</dbReference>
<dbReference type="InterPro" id="IPR006641">
    <property type="entry name" value="YqgF/RNaseH-like_dom"/>
</dbReference>
<dbReference type="InterPro" id="IPR037027">
    <property type="entry name" value="YqgF/RNaseH-like_dom_sf"/>
</dbReference>
<dbReference type="NCBIfam" id="TIGR00250">
    <property type="entry name" value="RNAse_H_YqgF"/>
    <property type="match status" value="1"/>
</dbReference>
<dbReference type="PANTHER" id="PTHR33317">
    <property type="entry name" value="POLYNUCLEOTIDYL TRANSFERASE, RIBONUCLEASE H-LIKE SUPERFAMILY PROTEIN"/>
    <property type="match status" value="1"/>
</dbReference>
<dbReference type="PANTHER" id="PTHR33317:SF4">
    <property type="entry name" value="POLYNUCLEOTIDYL TRANSFERASE, RIBONUCLEASE H-LIKE SUPERFAMILY PROTEIN"/>
    <property type="match status" value="1"/>
</dbReference>
<dbReference type="Pfam" id="PF03652">
    <property type="entry name" value="RuvX"/>
    <property type="match status" value="1"/>
</dbReference>
<dbReference type="SMART" id="SM00732">
    <property type="entry name" value="YqgFc"/>
    <property type="match status" value="1"/>
</dbReference>
<dbReference type="SUPFAM" id="SSF53098">
    <property type="entry name" value="Ribonuclease H-like"/>
    <property type="match status" value="1"/>
</dbReference>
<accession>C0ZZA9</accession>
<gene>
    <name type="ordered locus">RER_29860</name>
</gene>
<feature type="chain" id="PRO_1000212418" description="Putative pre-16S rRNA nuclease">
    <location>
        <begin position="1"/>
        <end position="177"/>
    </location>
</feature>
<feature type="region of interest" description="Disordered" evidence="2">
    <location>
        <begin position="1"/>
        <end position="20"/>
    </location>
</feature>
<name>YQGF_RHOE4</name>
<sequence>MVATQQGPDRPGIDDPGRGRRIAIDVGSVRIGVASSDPDGILATPVETVPRSKERGPDAPDIRRIIAIVSEYEAVEVIVGLPQTLRGEQGKAAGIATAFAKRLQRAVEPIPVRLSDERLTTVTAARNLRESGVKARGQRPMIDQAAAVEILQGWLDERSRAVKPGESSKDAALEGDL</sequence>